<evidence type="ECO:0000255" key="1">
    <source>
        <dbReference type="HAMAP-Rule" id="MF_00252"/>
    </source>
</evidence>
<accession>Q4AAC7</accession>
<proteinExistence type="inferred from homology"/>
<protein>
    <recommendedName>
        <fullName evidence="1">Lysine--tRNA ligase</fullName>
        <ecNumber evidence="1">6.1.1.6</ecNumber>
    </recommendedName>
    <alternativeName>
        <fullName evidence="1">Lysyl-tRNA synthetase</fullName>
        <shortName evidence="1">LysRS</shortName>
    </alternativeName>
</protein>
<dbReference type="EC" id="6.1.1.6" evidence="1"/>
<dbReference type="EMBL" id="AE017243">
    <property type="protein sequence ID" value="AAZ44294.2"/>
    <property type="molecule type" value="Genomic_DNA"/>
</dbReference>
<dbReference type="SMR" id="Q4AAC7"/>
<dbReference type="KEGG" id="mhj:MHJ_0203"/>
<dbReference type="eggNOG" id="COG1190">
    <property type="taxonomic scope" value="Bacteria"/>
</dbReference>
<dbReference type="HOGENOM" id="CLU_008255_6_0_14"/>
<dbReference type="Proteomes" id="UP000000548">
    <property type="component" value="Chromosome"/>
</dbReference>
<dbReference type="GO" id="GO:0005829">
    <property type="term" value="C:cytosol"/>
    <property type="evidence" value="ECO:0007669"/>
    <property type="project" value="TreeGrafter"/>
</dbReference>
<dbReference type="GO" id="GO:0005524">
    <property type="term" value="F:ATP binding"/>
    <property type="evidence" value="ECO:0007669"/>
    <property type="project" value="UniProtKB-UniRule"/>
</dbReference>
<dbReference type="GO" id="GO:0004824">
    <property type="term" value="F:lysine-tRNA ligase activity"/>
    <property type="evidence" value="ECO:0007669"/>
    <property type="project" value="UniProtKB-UniRule"/>
</dbReference>
<dbReference type="GO" id="GO:0000287">
    <property type="term" value="F:magnesium ion binding"/>
    <property type="evidence" value="ECO:0007669"/>
    <property type="project" value="UniProtKB-UniRule"/>
</dbReference>
<dbReference type="GO" id="GO:0000049">
    <property type="term" value="F:tRNA binding"/>
    <property type="evidence" value="ECO:0007669"/>
    <property type="project" value="TreeGrafter"/>
</dbReference>
<dbReference type="GO" id="GO:0006430">
    <property type="term" value="P:lysyl-tRNA aminoacylation"/>
    <property type="evidence" value="ECO:0007669"/>
    <property type="project" value="UniProtKB-UniRule"/>
</dbReference>
<dbReference type="CDD" id="cd00775">
    <property type="entry name" value="LysRS_core"/>
    <property type="match status" value="1"/>
</dbReference>
<dbReference type="CDD" id="cd04322">
    <property type="entry name" value="LysRS_N"/>
    <property type="match status" value="1"/>
</dbReference>
<dbReference type="Gene3D" id="3.30.930.10">
    <property type="entry name" value="Bira Bifunctional Protein, Domain 2"/>
    <property type="match status" value="1"/>
</dbReference>
<dbReference type="Gene3D" id="2.40.50.140">
    <property type="entry name" value="Nucleic acid-binding proteins"/>
    <property type="match status" value="1"/>
</dbReference>
<dbReference type="HAMAP" id="MF_00252">
    <property type="entry name" value="Lys_tRNA_synth_class2"/>
    <property type="match status" value="1"/>
</dbReference>
<dbReference type="InterPro" id="IPR004364">
    <property type="entry name" value="Aa-tRNA-synt_II"/>
</dbReference>
<dbReference type="InterPro" id="IPR006195">
    <property type="entry name" value="aa-tRNA-synth_II"/>
</dbReference>
<dbReference type="InterPro" id="IPR045864">
    <property type="entry name" value="aa-tRNA-synth_II/BPL/LPL"/>
</dbReference>
<dbReference type="InterPro" id="IPR002313">
    <property type="entry name" value="Lys-tRNA-ligase_II"/>
</dbReference>
<dbReference type="InterPro" id="IPR044136">
    <property type="entry name" value="Lys-tRNA-ligase_II_N"/>
</dbReference>
<dbReference type="InterPro" id="IPR018149">
    <property type="entry name" value="Lys-tRNA-synth_II_C"/>
</dbReference>
<dbReference type="InterPro" id="IPR012340">
    <property type="entry name" value="NA-bd_OB-fold"/>
</dbReference>
<dbReference type="NCBIfam" id="TIGR00499">
    <property type="entry name" value="lysS_bact"/>
    <property type="match status" value="1"/>
</dbReference>
<dbReference type="NCBIfam" id="NF001756">
    <property type="entry name" value="PRK00484.1"/>
    <property type="match status" value="1"/>
</dbReference>
<dbReference type="PANTHER" id="PTHR42918:SF15">
    <property type="entry name" value="LYSINE--TRNA LIGASE, CHLOROPLASTIC_MITOCHONDRIAL"/>
    <property type="match status" value="1"/>
</dbReference>
<dbReference type="PANTHER" id="PTHR42918">
    <property type="entry name" value="LYSYL-TRNA SYNTHETASE"/>
    <property type="match status" value="1"/>
</dbReference>
<dbReference type="Pfam" id="PF00152">
    <property type="entry name" value="tRNA-synt_2"/>
    <property type="match status" value="1"/>
</dbReference>
<dbReference type="PRINTS" id="PR00982">
    <property type="entry name" value="TRNASYNTHLYS"/>
</dbReference>
<dbReference type="SUPFAM" id="SSF55681">
    <property type="entry name" value="Class II aaRS and biotin synthetases"/>
    <property type="match status" value="1"/>
</dbReference>
<dbReference type="SUPFAM" id="SSF50249">
    <property type="entry name" value="Nucleic acid-binding proteins"/>
    <property type="match status" value="1"/>
</dbReference>
<dbReference type="PROSITE" id="PS50862">
    <property type="entry name" value="AA_TRNA_LIGASE_II"/>
    <property type="match status" value="1"/>
</dbReference>
<feature type="chain" id="PRO_1000012895" description="Lysine--tRNA ligase">
    <location>
        <begin position="1"/>
        <end position="491"/>
    </location>
</feature>
<feature type="binding site" evidence="1">
    <location>
        <position position="400"/>
    </location>
    <ligand>
        <name>Mg(2+)</name>
        <dbReference type="ChEBI" id="CHEBI:18420"/>
        <label>1</label>
    </ligand>
</feature>
<feature type="binding site" evidence="1">
    <location>
        <position position="407"/>
    </location>
    <ligand>
        <name>Mg(2+)</name>
        <dbReference type="ChEBI" id="CHEBI:18420"/>
        <label>1</label>
    </ligand>
</feature>
<feature type="binding site" evidence="1">
    <location>
        <position position="407"/>
    </location>
    <ligand>
        <name>Mg(2+)</name>
        <dbReference type="ChEBI" id="CHEBI:18420"/>
        <label>2</label>
    </ligand>
</feature>
<comment type="catalytic activity">
    <reaction evidence="1">
        <text>tRNA(Lys) + L-lysine + ATP = L-lysyl-tRNA(Lys) + AMP + diphosphate</text>
        <dbReference type="Rhea" id="RHEA:20792"/>
        <dbReference type="Rhea" id="RHEA-COMP:9696"/>
        <dbReference type="Rhea" id="RHEA-COMP:9697"/>
        <dbReference type="ChEBI" id="CHEBI:30616"/>
        <dbReference type="ChEBI" id="CHEBI:32551"/>
        <dbReference type="ChEBI" id="CHEBI:33019"/>
        <dbReference type="ChEBI" id="CHEBI:78442"/>
        <dbReference type="ChEBI" id="CHEBI:78529"/>
        <dbReference type="ChEBI" id="CHEBI:456215"/>
        <dbReference type="EC" id="6.1.1.6"/>
    </reaction>
</comment>
<comment type="cofactor">
    <cofactor evidence="1">
        <name>Mg(2+)</name>
        <dbReference type="ChEBI" id="CHEBI:18420"/>
    </cofactor>
    <text evidence="1">Binds 3 Mg(2+) ions per subunit.</text>
</comment>
<comment type="subunit">
    <text evidence="1">Homodimer.</text>
</comment>
<comment type="subcellular location">
    <subcellularLocation>
        <location evidence="1">Cytoplasm</location>
    </subcellularLocation>
</comment>
<comment type="similarity">
    <text evidence="1">Belongs to the class-II aminoacyl-tRNA synthetase family.</text>
</comment>
<keyword id="KW-0030">Aminoacyl-tRNA synthetase</keyword>
<keyword id="KW-0067">ATP-binding</keyword>
<keyword id="KW-0963">Cytoplasm</keyword>
<keyword id="KW-0436">Ligase</keyword>
<keyword id="KW-0460">Magnesium</keyword>
<keyword id="KW-0479">Metal-binding</keyword>
<keyword id="KW-0547">Nucleotide-binding</keyword>
<keyword id="KW-0648">Protein biosynthesis</keyword>
<reference key="1">
    <citation type="journal article" date="2005" name="J. Bacteriol.">
        <title>Swine and poultry pathogens: the complete genome sequences of two strains of Mycoplasma hyopneumoniae and a strain of Mycoplasma synoviae.</title>
        <authorList>
            <person name="Vasconcelos A.T.R."/>
            <person name="Ferreira H.B."/>
            <person name="Bizarro C.V."/>
            <person name="Bonatto S.L."/>
            <person name="Carvalho M.O."/>
            <person name="Pinto P.M."/>
            <person name="Almeida D.F."/>
            <person name="Almeida L.G.P."/>
            <person name="Almeida R."/>
            <person name="Alves-Junior L."/>
            <person name="Assuncao E.N."/>
            <person name="Azevedo V.A.C."/>
            <person name="Bogo M.R."/>
            <person name="Brigido M.M."/>
            <person name="Brocchi M."/>
            <person name="Burity H.A."/>
            <person name="Camargo A.A."/>
            <person name="Camargo S.S."/>
            <person name="Carepo M.S."/>
            <person name="Carraro D.M."/>
            <person name="de Mattos Cascardo J.C."/>
            <person name="Castro L.A."/>
            <person name="Cavalcanti G."/>
            <person name="Chemale G."/>
            <person name="Collevatti R.G."/>
            <person name="Cunha C.W."/>
            <person name="Dallagiovanna B."/>
            <person name="Dambros B.P."/>
            <person name="Dellagostin O.A."/>
            <person name="Falcao C."/>
            <person name="Fantinatti-Garboggini F."/>
            <person name="Felipe M.S.S."/>
            <person name="Fiorentin L."/>
            <person name="Franco G.R."/>
            <person name="Freitas N.S.A."/>
            <person name="Frias D."/>
            <person name="Grangeiro T.B."/>
            <person name="Grisard E.C."/>
            <person name="Guimaraes C.T."/>
            <person name="Hungria M."/>
            <person name="Jardim S.N."/>
            <person name="Krieger M.A."/>
            <person name="Laurino J.P."/>
            <person name="Lima L.F.A."/>
            <person name="Lopes M.I."/>
            <person name="Loreto E.L.S."/>
            <person name="Madeira H.M.F."/>
            <person name="Manfio G.P."/>
            <person name="Maranhao A.Q."/>
            <person name="Martinkovics C.T."/>
            <person name="Medeiros S.R.B."/>
            <person name="Moreira M.A.M."/>
            <person name="Neiva M."/>
            <person name="Ramalho-Neto C.E."/>
            <person name="Nicolas M.F."/>
            <person name="Oliveira S.C."/>
            <person name="Paixao R.F.C."/>
            <person name="Pedrosa F.O."/>
            <person name="Pena S.D.J."/>
            <person name="Pereira M."/>
            <person name="Pereira-Ferrari L."/>
            <person name="Piffer I."/>
            <person name="Pinto L.S."/>
            <person name="Potrich D.P."/>
            <person name="Salim A.C.M."/>
            <person name="Santos F.R."/>
            <person name="Schmitt R."/>
            <person name="Schneider M.P.C."/>
            <person name="Schrank A."/>
            <person name="Schrank I.S."/>
            <person name="Schuck A.F."/>
            <person name="Seuanez H.N."/>
            <person name="Silva D.W."/>
            <person name="Silva R."/>
            <person name="Silva S.C."/>
            <person name="Soares C.M.A."/>
            <person name="Souza K.R.L."/>
            <person name="Souza R.C."/>
            <person name="Staats C.C."/>
            <person name="Steffens M.B.R."/>
            <person name="Teixeira S.M.R."/>
            <person name="Urmenyi T.P."/>
            <person name="Vainstein M.H."/>
            <person name="Zuccherato L.W."/>
            <person name="Simpson A.J.G."/>
            <person name="Zaha A."/>
        </authorList>
    </citation>
    <scope>NUCLEOTIDE SEQUENCE [LARGE SCALE GENOMIC DNA]</scope>
    <source>
        <strain>J / ATCC 25934 / NCTC 10110</strain>
    </source>
</reference>
<gene>
    <name evidence="1" type="primary">lysS</name>
    <name type="ordered locus">MHJ_0203</name>
</gene>
<sequence>MKIMSKLNDQQQFRRDKLKNLVKNGFNFPSSTFEHDNLVEINEKFSQKSKEFFLENQVKIAFAGRLIRQRGPFFIIFSQNLQFQAYISKEFQKKNEFIFANLDLGDIIEVSGYLFKTQTGQLSIKVNNFSLLTKSLHPLPDQYYGIENPDEKYRKRYLDLLVNSESAKTFRLRSKIISLIRTFFDSQGFLEVDTPVLQPVLGGASAKPFITYYNSLSQNFYLRIATELPLKKLLVAGFDRVYEIGKIFRNEGFDSTHNPEFTSIEFYQAYANLEKIMDQTENLFRFLFEKLNLDPANFDFSNKKINFLEKFARYDMIEITSKLMNFDLKSANFADLVEKAKKEGVKIEPFFKKGHLINKFFEKFVEPTLINPTFIIGHPIEISPLAKSNPNNPNFTLRAELFICGKEFANMFDELNDPIDQLSRFQAQIIEKNQGNQEASEIDNEFVQALEYGMPPAGGCGIGIDRLTMLLTKNESIREVILFPQLKPKKD</sequence>
<name>SYK_MESHJ</name>
<organism>
    <name type="scientific">Mesomycoplasma hyopneumoniae (strain J / ATCC 25934 / NCTC 10110)</name>
    <name type="common">Mycoplasma hyopneumoniae</name>
    <dbReference type="NCBI Taxonomy" id="262719"/>
    <lineage>
        <taxon>Bacteria</taxon>
        <taxon>Bacillati</taxon>
        <taxon>Mycoplasmatota</taxon>
        <taxon>Mycoplasmoidales</taxon>
        <taxon>Metamycoplasmataceae</taxon>
        <taxon>Mesomycoplasma</taxon>
    </lineage>
</organism>